<proteinExistence type="inferred from homology"/>
<evidence type="ECO:0000255" key="1">
    <source>
        <dbReference type="HAMAP-Rule" id="MF_00210"/>
    </source>
</evidence>
<sequence length="430" mass="46775">MEIKLKKTNYVSGVIEVPSDKSITHRAVMLSSLAEGNSIVRDYLPSDDCNRTIEAFRQMGVEIKIDNGSLYVKGAGLKLAKPQNGKYNIYAGNSGTTTRLLSGILAGQDFETVITGDDSLSKRPMRRVILPLSQMGANIKSNDGLLPLIIKGRNPLKELNYESDKSTAQVKSAILFAGLFADGATTYKEPVKSRDHSERMLKAFGVNIKVNGNFVTVYPAEKLIAQDITVPGDISSAAFFIAAALIVPDSNLTIRNVGVNPTRDGLIEVLKQMGADITLANMREISQEPVCDIVVKYSKLKAADIDASLVPRMVDEIPVFVLIATQADGITRISGAKELRVKESDRIESVTSQFKKLGAQIESLEDGFIINGNSKFNLAGTIVDSFDDHRIAMTLAIASLIAEGETIIRDSHCVDISFPGFYKVLNNICR</sequence>
<keyword id="KW-0028">Amino-acid biosynthesis</keyword>
<keyword id="KW-0057">Aromatic amino acid biosynthesis</keyword>
<keyword id="KW-0963">Cytoplasm</keyword>
<keyword id="KW-0808">Transferase</keyword>
<comment type="function">
    <text evidence="1">Catalyzes the transfer of the enolpyruvyl moiety of phosphoenolpyruvate (PEP) to the 5-hydroxyl of shikimate-3-phosphate (S3P) to produce enolpyruvyl shikimate-3-phosphate and inorganic phosphate.</text>
</comment>
<comment type="catalytic activity">
    <reaction evidence="1">
        <text>3-phosphoshikimate + phosphoenolpyruvate = 5-O-(1-carboxyvinyl)-3-phosphoshikimate + phosphate</text>
        <dbReference type="Rhea" id="RHEA:21256"/>
        <dbReference type="ChEBI" id="CHEBI:43474"/>
        <dbReference type="ChEBI" id="CHEBI:57701"/>
        <dbReference type="ChEBI" id="CHEBI:58702"/>
        <dbReference type="ChEBI" id="CHEBI:145989"/>
        <dbReference type="EC" id="2.5.1.19"/>
    </reaction>
    <physiologicalReaction direction="left-to-right" evidence="1">
        <dbReference type="Rhea" id="RHEA:21257"/>
    </physiologicalReaction>
</comment>
<comment type="pathway">
    <text evidence="1">Metabolic intermediate biosynthesis; chorismate biosynthesis; chorismate from D-erythrose 4-phosphate and phosphoenolpyruvate: step 6/7.</text>
</comment>
<comment type="subunit">
    <text evidence="1">Monomer.</text>
</comment>
<comment type="subcellular location">
    <subcellularLocation>
        <location evidence="1">Cytoplasm</location>
    </subcellularLocation>
</comment>
<comment type="similarity">
    <text evidence="1">Belongs to the EPSP synthase family.</text>
</comment>
<protein>
    <recommendedName>
        <fullName evidence="1">3-phosphoshikimate 1-carboxyvinyltransferase</fullName>
        <ecNumber evidence="1">2.5.1.19</ecNumber>
    </recommendedName>
    <alternativeName>
        <fullName evidence="1">5-enolpyruvylshikimate-3-phosphate synthase</fullName>
        <shortName evidence="1">EPSP synthase</shortName>
        <shortName evidence="1">EPSPS</shortName>
    </alternativeName>
</protein>
<name>AROA_ENDTX</name>
<organism>
    <name type="scientific">Endomicrobium trichonymphae</name>
    <dbReference type="NCBI Taxonomy" id="1408204"/>
    <lineage>
        <taxon>Bacteria</taxon>
        <taxon>Pseudomonadati</taxon>
        <taxon>Elusimicrobiota</taxon>
        <taxon>Endomicrobiia</taxon>
        <taxon>Endomicrobiales</taxon>
        <taxon>Endomicrobiaceae</taxon>
        <taxon>Candidatus Endomicrobiellum</taxon>
    </lineage>
</organism>
<dbReference type="EC" id="2.5.1.19" evidence="1"/>
<dbReference type="EMBL" id="AP009510">
    <property type="protein sequence ID" value="BAG14146.1"/>
    <property type="molecule type" value="Genomic_DNA"/>
</dbReference>
<dbReference type="RefSeq" id="WP_015423670.1">
    <property type="nucleotide sequence ID" value="NC_020419.1"/>
</dbReference>
<dbReference type="SMR" id="B1GYQ3"/>
<dbReference type="STRING" id="471821.TGRD_663"/>
<dbReference type="KEGG" id="rsd:TGRD_663"/>
<dbReference type="PATRIC" id="fig|471821.5.peg.1133"/>
<dbReference type="HOGENOM" id="CLU_024321_0_1_0"/>
<dbReference type="UniPathway" id="UPA00053">
    <property type="reaction ID" value="UER00089"/>
</dbReference>
<dbReference type="Proteomes" id="UP000001691">
    <property type="component" value="Chromosome"/>
</dbReference>
<dbReference type="GO" id="GO:0005737">
    <property type="term" value="C:cytoplasm"/>
    <property type="evidence" value="ECO:0007669"/>
    <property type="project" value="UniProtKB-SubCell"/>
</dbReference>
<dbReference type="GO" id="GO:0003866">
    <property type="term" value="F:3-phosphoshikimate 1-carboxyvinyltransferase activity"/>
    <property type="evidence" value="ECO:0007669"/>
    <property type="project" value="UniProtKB-UniRule"/>
</dbReference>
<dbReference type="GO" id="GO:0008652">
    <property type="term" value="P:amino acid biosynthetic process"/>
    <property type="evidence" value="ECO:0007669"/>
    <property type="project" value="UniProtKB-KW"/>
</dbReference>
<dbReference type="GO" id="GO:0009073">
    <property type="term" value="P:aromatic amino acid family biosynthetic process"/>
    <property type="evidence" value="ECO:0007669"/>
    <property type="project" value="UniProtKB-KW"/>
</dbReference>
<dbReference type="GO" id="GO:0009423">
    <property type="term" value="P:chorismate biosynthetic process"/>
    <property type="evidence" value="ECO:0007669"/>
    <property type="project" value="UniProtKB-UniRule"/>
</dbReference>
<dbReference type="CDD" id="cd01556">
    <property type="entry name" value="EPSP_synthase"/>
    <property type="match status" value="1"/>
</dbReference>
<dbReference type="FunFam" id="3.65.10.10:FF:000005">
    <property type="entry name" value="3-phosphoshikimate 1-carboxyvinyltransferase"/>
    <property type="match status" value="1"/>
</dbReference>
<dbReference type="FunFam" id="3.65.10.10:FF:000006">
    <property type="entry name" value="3-phosphoshikimate 1-carboxyvinyltransferase"/>
    <property type="match status" value="1"/>
</dbReference>
<dbReference type="Gene3D" id="3.65.10.10">
    <property type="entry name" value="Enolpyruvate transferase domain"/>
    <property type="match status" value="2"/>
</dbReference>
<dbReference type="HAMAP" id="MF_00210">
    <property type="entry name" value="EPSP_synth"/>
    <property type="match status" value="1"/>
</dbReference>
<dbReference type="InterPro" id="IPR001986">
    <property type="entry name" value="Enolpyruvate_Tfrase_dom"/>
</dbReference>
<dbReference type="InterPro" id="IPR036968">
    <property type="entry name" value="Enolpyruvate_Tfrase_sf"/>
</dbReference>
<dbReference type="InterPro" id="IPR006264">
    <property type="entry name" value="EPSP_synthase"/>
</dbReference>
<dbReference type="InterPro" id="IPR023193">
    <property type="entry name" value="EPSP_synthase_CS"/>
</dbReference>
<dbReference type="InterPro" id="IPR013792">
    <property type="entry name" value="RNA3'P_cycl/enolpyr_Trfase_a/b"/>
</dbReference>
<dbReference type="NCBIfam" id="TIGR01356">
    <property type="entry name" value="aroA"/>
    <property type="match status" value="1"/>
</dbReference>
<dbReference type="PANTHER" id="PTHR21090">
    <property type="entry name" value="AROM/DEHYDROQUINATE SYNTHASE"/>
    <property type="match status" value="1"/>
</dbReference>
<dbReference type="PANTHER" id="PTHR21090:SF5">
    <property type="entry name" value="PENTAFUNCTIONAL AROM POLYPEPTIDE"/>
    <property type="match status" value="1"/>
</dbReference>
<dbReference type="Pfam" id="PF00275">
    <property type="entry name" value="EPSP_synthase"/>
    <property type="match status" value="1"/>
</dbReference>
<dbReference type="PIRSF" id="PIRSF000505">
    <property type="entry name" value="EPSPS"/>
    <property type="match status" value="1"/>
</dbReference>
<dbReference type="SUPFAM" id="SSF55205">
    <property type="entry name" value="EPT/RTPC-like"/>
    <property type="match status" value="1"/>
</dbReference>
<dbReference type="PROSITE" id="PS00104">
    <property type="entry name" value="EPSP_SYNTHASE_1"/>
    <property type="match status" value="1"/>
</dbReference>
<dbReference type="PROSITE" id="PS00885">
    <property type="entry name" value="EPSP_SYNTHASE_2"/>
    <property type="match status" value="1"/>
</dbReference>
<gene>
    <name evidence="1" type="primary">aroA</name>
    <name type="ordered locus">TGRD_663</name>
</gene>
<feature type="chain" id="PRO_1000099764" description="3-phosphoshikimate 1-carboxyvinyltransferase">
    <location>
        <begin position="1"/>
        <end position="430"/>
    </location>
</feature>
<feature type="active site" description="Proton acceptor" evidence="1">
    <location>
        <position position="315"/>
    </location>
</feature>
<feature type="binding site" evidence="1">
    <location>
        <position position="21"/>
    </location>
    <ligand>
        <name>3-phosphoshikimate</name>
        <dbReference type="ChEBI" id="CHEBI:145989"/>
    </ligand>
</feature>
<feature type="binding site" evidence="1">
    <location>
        <position position="21"/>
    </location>
    <ligand>
        <name>phosphoenolpyruvate</name>
        <dbReference type="ChEBI" id="CHEBI:58702"/>
    </ligand>
</feature>
<feature type="binding site" evidence="1">
    <location>
        <position position="22"/>
    </location>
    <ligand>
        <name>3-phosphoshikimate</name>
        <dbReference type="ChEBI" id="CHEBI:145989"/>
    </ligand>
</feature>
<feature type="binding site" evidence="1">
    <location>
        <position position="26"/>
    </location>
    <ligand>
        <name>3-phosphoshikimate</name>
        <dbReference type="ChEBI" id="CHEBI:145989"/>
    </ligand>
</feature>
<feature type="binding site" evidence="1">
    <location>
        <position position="95"/>
    </location>
    <ligand>
        <name>phosphoenolpyruvate</name>
        <dbReference type="ChEBI" id="CHEBI:58702"/>
    </ligand>
</feature>
<feature type="binding site" evidence="1">
    <location>
        <position position="123"/>
    </location>
    <ligand>
        <name>phosphoenolpyruvate</name>
        <dbReference type="ChEBI" id="CHEBI:58702"/>
    </ligand>
</feature>
<feature type="binding site" evidence="1">
    <location>
        <position position="167"/>
    </location>
    <ligand>
        <name>3-phosphoshikimate</name>
        <dbReference type="ChEBI" id="CHEBI:145989"/>
    </ligand>
</feature>
<feature type="binding site" evidence="1">
    <location>
        <position position="169"/>
    </location>
    <ligand>
        <name>3-phosphoshikimate</name>
        <dbReference type="ChEBI" id="CHEBI:145989"/>
    </ligand>
</feature>
<feature type="binding site" evidence="1">
    <location>
        <position position="169"/>
    </location>
    <ligand>
        <name>phosphoenolpyruvate</name>
        <dbReference type="ChEBI" id="CHEBI:58702"/>
    </ligand>
</feature>
<feature type="binding site" evidence="1">
    <location>
        <position position="315"/>
    </location>
    <ligand>
        <name>3-phosphoshikimate</name>
        <dbReference type="ChEBI" id="CHEBI:145989"/>
    </ligand>
</feature>
<feature type="binding site" evidence="1">
    <location>
        <position position="342"/>
    </location>
    <ligand>
        <name>3-phosphoshikimate</name>
        <dbReference type="ChEBI" id="CHEBI:145989"/>
    </ligand>
</feature>
<feature type="binding site" evidence="1">
    <location>
        <position position="346"/>
    </location>
    <ligand>
        <name>phosphoenolpyruvate</name>
        <dbReference type="ChEBI" id="CHEBI:58702"/>
    </ligand>
</feature>
<feature type="binding site" evidence="1">
    <location>
        <position position="390"/>
    </location>
    <ligand>
        <name>phosphoenolpyruvate</name>
        <dbReference type="ChEBI" id="CHEBI:58702"/>
    </ligand>
</feature>
<reference key="1">
    <citation type="journal article" date="2008" name="Proc. Natl. Acad. Sci. U.S.A.">
        <title>Complete genome of the uncultured termite group 1 bacteria in a single host protist cell.</title>
        <authorList>
            <person name="Hongoh Y."/>
            <person name="Sharma V.K."/>
            <person name="Prakash T."/>
            <person name="Noda S."/>
            <person name="Taylor T.D."/>
            <person name="Kudo T."/>
            <person name="Sakaki Y."/>
            <person name="Toyoda A."/>
            <person name="Hattori M."/>
            <person name="Ohkuma M."/>
        </authorList>
    </citation>
    <scope>NUCLEOTIDE SEQUENCE [LARGE SCALE GENOMIC DNA]</scope>
</reference>
<accession>B1GYQ3</accession>